<feature type="chain" id="PRO_1000051227" description="Small ribosomal subunit protein uS9">
    <location>
        <begin position="1"/>
        <end position="130"/>
    </location>
</feature>
<reference key="1">
    <citation type="journal article" date="2007" name="Genome Biol.">
        <title>Characterization and modeling of the Haemophilus influenzae core and supragenomes based on the complete genomic sequences of Rd and 12 clinical nontypeable strains.</title>
        <authorList>
            <person name="Hogg J.S."/>
            <person name="Hu F.Z."/>
            <person name="Janto B."/>
            <person name="Boissy R."/>
            <person name="Hayes J."/>
            <person name="Keefe R."/>
            <person name="Post J.C."/>
            <person name="Ehrlich G.D."/>
        </authorList>
    </citation>
    <scope>NUCLEOTIDE SEQUENCE [LARGE SCALE GENOMIC DNA]</scope>
    <source>
        <strain>PittEE</strain>
    </source>
</reference>
<dbReference type="EMBL" id="CP000671">
    <property type="protein sequence ID" value="ABQ98355.1"/>
    <property type="molecule type" value="Genomic_DNA"/>
</dbReference>
<dbReference type="SMR" id="A5UC54"/>
<dbReference type="KEGG" id="hip:CGSHiEE_04810"/>
<dbReference type="HOGENOM" id="CLU_046483_2_1_6"/>
<dbReference type="GO" id="GO:0022627">
    <property type="term" value="C:cytosolic small ribosomal subunit"/>
    <property type="evidence" value="ECO:0007669"/>
    <property type="project" value="TreeGrafter"/>
</dbReference>
<dbReference type="GO" id="GO:0003723">
    <property type="term" value="F:RNA binding"/>
    <property type="evidence" value="ECO:0007669"/>
    <property type="project" value="TreeGrafter"/>
</dbReference>
<dbReference type="GO" id="GO:0003735">
    <property type="term" value="F:structural constituent of ribosome"/>
    <property type="evidence" value="ECO:0007669"/>
    <property type="project" value="InterPro"/>
</dbReference>
<dbReference type="GO" id="GO:0006412">
    <property type="term" value="P:translation"/>
    <property type="evidence" value="ECO:0007669"/>
    <property type="project" value="UniProtKB-UniRule"/>
</dbReference>
<dbReference type="FunFam" id="3.30.230.10:FF:000001">
    <property type="entry name" value="30S ribosomal protein S9"/>
    <property type="match status" value="1"/>
</dbReference>
<dbReference type="Gene3D" id="3.30.230.10">
    <property type="match status" value="1"/>
</dbReference>
<dbReference type="HAMAP" id="MF_00532_B">
    <property type="entry name" value="Ribosomal_uS9_B"/>
    <property type="match status" value="1"/>
</dbReference>
<dbReference type="InterPro" id="IPR020568">
    <property type="entry name" value="Ribosomal_Su5_D2-typ_SF"/>
</dbReference>
<dbReference type="InterPro" id="IPR000754">
    <property type="entry name" value="Ribosomal_uS9"/>
</dbReference>
<dbReference type="InterPro" id="IPR023035">
    <property type="entry name" value="Ribosomal_uS9_bac/plastid"/>
</dbReference>
<dbReference type="InterPro" id="IPR020574">
    <property type="entry name" value="Ribosomal_uS9_CS"/>
</dbReference>
<dbReference type="InterPro" id="IPR014721">
    <property type="entry name" value="Ribsml_uS5_D2-typ_fold_subgr"/>
</dbReference>
<dbReference type="NCBIfam" id="NF001099">
    <property type="entry name" value="PRK00132.1"/>
    <property type="match status" value="1"/>
</dbReference>
<dbReference type="PANTHER" id="PTHR21569">
    <property type="entry name" value="RIBOSOMAL PROTEIN S9"/>
    <property type="match status" value="1"/>
</dbReference>
<dbReference type="PANTHER" id="PTHR21569:SF1">
    <property type="entry name" value="SMALL RIBOSOMAL SUBUNIT PROTEIN US9M"/>
    <property type="match status" value="1"/>
</dbReference>
<dbReference type="Pfam" id="PF00380">
    <property type="entry name" value="Ribosomal_S9"/>
    <property type="match status" value="1"/>
</dbReference>
<dbReference type="SUPFAM" id="SSF54211">
    <property type="entry name" value="Ribosomal protein S5 domain 2-like"/>
    <property type="match status" value="1"/>
</dbReference>
<dbReference type="PROSITE" id="PS00360">
    <property type="entry name" value="RIBOSOMAL_S9"/>
    <property type="match status" value="1"/>
</dbReference>
<evidence type="ECO:0000255" key="1">
    <source>
        <dbReference type="HAMAP-Rule" id="MF_00532"/>
    </source>
</evidence>
<evidence type="ECO:0000305" key="2"/>
<gene>
    <name evidence="1" type="primary">rpsI</name>
    <name type="ordered locus">CGSHiEE_04810</name>
</gene>
<sequence>MAENQNYGTGRRKSSSARVFIKPGSGKITINQRELDVYFGRETARMVVRQPLELVELTDKLDLYITVKGGGISGQAGAIRHGITRALMEYDETLRPALRAAGFVTRDARRVERKKVGLHKARRRPQYSKR</sequence>
<name>RS9_HAEIE</name>
<accession>A5UC54</accession>
<protein>
    <recommendedName>
        <fullName evidence="1">Small ribosomal subunit protein uS9</fullName>
    </recommendedName>
    <alternativeName>
        <fullName evidence="2">30S ribosomal protein S9</fullName>
    </alternativeName>
</protein>
<proteinExistence type="inferred from homology"/>
<comment type="similarity">
    <text evidence="1">Belongs to the universal ribosomal protein uS9 family.</text>
</comment>
<keyword id="KW-0687">Ribonucleoprotein</keyword>
<keyword id="KW-0689">Ribosomal protein</keyword>
<organism>
    <name type="scientific">Haemophilus influenzae (strain PittEE)</name>
    <dbReference type="NCBI Taxonomy" id="374930"/>
    <lineage>
        <taxon>Bacteria</taxon>
        <taxon>Pseudomonadati</taxon>
        <taxon>Pseudomonadota</taxon>
        <taxon>Gammaproteobacteria</taxon>
        <taxon>Pasteurellales</taxon>
        <taxon>Pasteurellaceae</taxon>
        <taxon>Haemophilus</taxon>
    </lineage>
</organism>